<name>PRMC_PASMU</name>
<protein>
    <recommendedName>
        <fullName evidence="1">Release factor glutamine methyltransferase</fullName>
        <shortName evidence="1">RF MTase</shortName>
        <ecNumber evidence="1">2.1.1.297</ecNumber>
    </recommendedName>
    <alternativeName>
        <fullName>M.PmuHemKP</fullName>
    </alternativeName>
    <alternativeName>
        <fullName evidence="1">N5-glutamine methyltransferase PrmC</fullName>
    </alternativeName>
    <alternativeName>
        <fullName evidence="1">Protein-(glutamine-N5) MTase PrmC</fullName>
    </alternativeName>
    <alternativeName>
        <fullName evidence="1">Protein-glutamine N-methyltransferase PrmC</fullName>
    </alternativeName>
</protein>
<reference key="1">
    <citation type="journal article" date="2001" name="Proc. Natl. Acad. Sci. U.S.A.">
        <title>Complete genomic sequence of Pasteurella multocida Pm70.</title>
        <authorList>
            <person name="May B.J."/>
            <person name="Zhang Q."/>
            <person name="Li L.L."/>
            <person name="Paustian M.L."/>
            <person name="Whittam T.S."/>
            <person name="Kapur V."/>
        </authorList>
    </citation>
    <scope>NUCLEOTIDE SEQUENCE [LARGE SCALE GENOMIC DNA]</scope>
    <source>
        <strain>Pm70</strain>
    </source>
</reference>
<proteinExistence type="inferred from homology"/>
<accession>Q9CN82</accession>
<sequence length="298" mass="33428">MTYQEWRQFAEHVLMKNKENDPFLDVKSESVLLLQTVTKRSKASILAFSETVLTEVELQQLAQLLMRRAKGEPIAYILGEKAFWSLSLKVSEHTLIPRPDTEVLVEHALDFAKQRVTSAHVSGELSILDLGTGTGAIALALAAELTPLTQKCGINLNILGVDRIAEAVALAKDNAKQNELKVNFLQSVWFDALNPEIRFDLIVSNPPYIDKNDPHLTQGDVRFEPLSALVAAEEGYADIRHIIEQAPLFLKPQGALLLEHGWQQAEKVRSIFQKNLWHNVATLKDYSGNERVTLGCWR</sequence>
<organism>
    <name type="scientific">Pasteurella multocida (strain Pm70)</name>
    <dbReference type="NCBI Taxonomy" id="272843"/>
    <lineage>
        <taxon>Bacteria</taxon>
        <taxon>Pseudomonadati</taxon>
        <taxon>Pseudomonadota</taxon>
        <taxon>Gammaproteobacteria</taxon>
        <taxon>Pasteurellales</taxon>
        <taxon>Pasteurellaceae</taxon>
        <taxon>Pasteurella</taxon>
    </lineage>
</organism>
<evidence type="ECO:0000255" key="1">
    <source>
        <dbReference type="HAMAP-Rule" id="MF_02126"/>
    </source>
</evidence>
<keyword id="KW-0489">Methyltransferase</keyword>
<keyword id="KW-1185">Reference proteome</keyword>
<keyword id="KW-0949">S-adenosyl-L-methionine</keyword>
<keyword id="KW-0808">Transferase</keyword>
<gene>
    <name evidence="1" type="primary">prmC</name>
    <name type="synonym">hemK</name>
    <name type="ordered locus">PM0556</name>
</gene>
<dbReference type="EC" id="2.1.1.297" evidence="1"/>
<dbReference type="EMBL" id="AE004439">
    <property type="protein sequence ID" value="AAK02640.1"/>
    <property type="molecule type" value="Genomic_DNA"/>
</dbReference>
<dbReference type="RefSeq" id="WP_010906722.1">
    <property type="nucleotide sequence ID" value="NC_002663.1"/>
</dbReference>
<dbReference type="SMR" id="Q9CN82"/>
<dbReference type="STRING" id="272843.PM0556"/>
<dbReference type="EnsemblBacteria" id="AAK02640">
    <property type="protein sequence ID" value="AAK02640"/>
    <property type="gene ID" value="PM0556"/>
</dbReference>
<dbReference type="KEGG" id="pmu:PM0556"/>
<dbReference type="PATRIC" id="fig|272843.6.peg.563"/>
<dbReference type="HOGENOM" id="CLU_018398_3_0_6"/>
<dbReference type="OrthoDB" id="9800643at2"/>
<dbReference type="Proteomes" id="UP000000809">
    <property type="component" value="Chromosome"/>
</dbReference>
<dbReference type="GO" id="GO:0003676">
    <property type="term" value="F:nucleic acid binding"/>
    <property type="evidence" value="ECO:0007669"/>
    <property type="project" value="InterPro"/>
</dbReference>
<dbReference type="GO" id="GO:0102559">
    <property type="term" value="F:protein-(glutamine-N5) methyltransferase activity"/>
    <property type="evidence" value="ECO:0007669"/>
    <property type="project" value="UniProtKB-EC"/>
</dbReference>
<dbReference type="GO" id="GO:0036009">
    <property type="term" value="F:protein-glutamine N-methyltransferase activity"/>
    <property type="evidence" value="ECO:0007669"/>
    <property type="project" value="UniProtKB-UniRule"/>
</dbReference>
<dbReference type="GO" id="GO:0032259">
    <property type="term" value="P:methylation"/>
    <property type="evidence" value="ECO:0007669"/>
    <property type="project" value="UniProtKB-KW"/>
</dbReference>
<dbReference type="CDD" id="cd02440">
    <property type="entry name" value="AdoMet_MTases"/>
    <property type="match status" value="1"/>
</dbReference>
<dbReference type="FunFam" id="3.40.50.150:FF:000053">
    <property type="entry name" value="Release factor glutamine methyltransferase"/>
    <property type="match status" value="1"/>
</dbReference>
<dbReference type="Gene3D" id="1.10.8.10">
    <property type="entry name" value="DNA helicase RuvA subunit, C-terminal domain"/>
    <property type="match status" value="1"/>
</dbReference>
<dbReference type="Gene3D" id="3.40.50.150">
    <property type="entry name" value="Vaccinia Virus protein VP39"/>
    <property type="match status" value="1"/>
</dbReference>
<dbReference type="HAMAP" id="MF_02126">
    <property type="entry name" value="RF_methyltr_PrmC"/>
    <property type="match status" value="1"/>
</dbReference>
<dbReference type="InterPro" id="IPR002052">
    <property type="entry name" value="DNA_methylase_N6_adenine_CS"/>
</dbReference>
<dbReference type="InterPro" id="IPR004556">
    <property type="entry name" value="HemK-like"/>
</dbReference>
<dbReference type="InterPro" id="IPR025714">
    <property type="entry name" value="Methyltranfer_dom"/>
</dbReference>
<dbReference type="InterPro" id="IPR050320">
    <property type="entry name" value="N5-glutamine_MTase"/>
</dbReference>
<dbReference type="InterPro" id="IPR040758">
    <property type="entry name" value="PrmC_N"/>
</dbReference>
<dbReference type="InterPro" id="IPR019874">
    <property type="entry name" value="RF_methyltr_PrmC"/>
</dbReference>
<dbReference type="InterPro" id="IPR029063">
    <property type="entry name" value="SAM-dependent_MTases_sf"/>
</dbReference>
<dbReference type="NCBIfam" id="TIGR00536">
    <property type="entry name" value="hemK_fam"/>
    <property type="match status" value="1"/>
</dbReference>
<dbReference type="NCBIfam" id="TIGR03534">
    <property type="entry name" value="RF_mod_PrmC"/>
    <property type="match status" value="1"/>
</dbReference>
<dbReference type="PANTHER" id="PTHR18895">
    <property type="entry name" value="HEMK METHYLTRANSFERASE"/>
    <property type="match status" value="1"/>
</dbReference>
<dbReference type="PANTHER" id="PTHR18895:SF74">
    <property type="entry name" value="MTRF1L RELEASE FACTOR GLUTAMINE METHYLTRANSFERASE"/>
    <property type="match status" value="1"/>
</dbReference>
<dbReference type="Pfam" id="PF13847">
    <property type="entry name" value="Methyltransf_31"/>
    <property type="match status" value="1"/>
</dbReference>
<dbReference type="Pfam" id="PF17827">
    <property type="entry name" value="PrmC_N"/>
    <property type="match status" value="1"/>
</dbReference>
<dbReference type="SUPFAM" id="SSF53335">
    <property type="entry name" value="S-adenosyl-L-methionine-dependent methyltransferases"/>
    <property type="match status" value="1"/>
</dbReference>
<comment type="function">
    <text evidence="1">Methylates the class 1 translation termination release factors RF1/PrfA and RF2/PrfB on the glutamine residue of the universally conserved GGQ motif.</text>
</comment>
<comment type="catalytic activity">
    <reaction evidence="1">
        <text>L-glutaminyl-[peptide chain release factor] + S-adenosyl-L-methionine = N(5)-methyl-L-glutaminyl-[peptide chain release factor] + S-adenosyl-L-homocysteine + H(+)</text>
        <dbReference type="Rhea" id="RHEA:42896"/>
        <dbReference type="Rhea" id="RHEA-COMP:10271"/>
        <dbReference type="Rhea" id="RHEA-COMP:10272"/>
        <dbReference type="ChEBI" id="CHEBI:15378"/>
        <dbReference type="ChEBI" id="CHEBI:30011"/>
        <dbReference type="ChEBI" id="CHEBI:57856"/>
        <dbReference type="ChEBI" id="CHEBI:59789"/>
        <dbReference type="ChEBI" id="CHEBI:61891"/>
        <dbReference type="EC" id="2.1.1.297"/>
    </reaction>
</comment>
<comment type="similarity">
    <text evidence="1">Belongs to the protein N5-glutamine methyltransferase family. PrmC subfamily.</text>
</comment>
<feature type="chain" id="PRO_0000157167" description="Release factor glutamine methyltransferase">
    <location>
        <begin position="1"/>
        <end position="298"/>
    </location>
</feature>
<feature type="binding site" evidence="1">
    <location>
        <begin position="131"/>
        <end position="135"/>
    </location>
    <ligand>
        <name>S-adenosyl-L-methionine</name>
        <dbReference type="ChEBI" id="CHEBI:59789"/>
    </ligand>
</feature>
<feature type="binding site" evidence="1">
    <location>
        <position position="162"/>
    </location>
    <ligand>
        <name>S-adenosyl-L-methionine</name>
        <dbReference type="ChEBI" id="CHEBI:59789"/>
    </ligand>
</feature>
<feature type="binding site" evidence="1">
    <location>
        <position position="189"/>
    </location>
    <ligand>
        <name>S-adenosyl-L-methionine</name>
        <dbReference type="ChEBI" id="CHEBI:59789"/>
    </ligand>
</feature>
<feature type="binding site" evidence="1">
    <location>
        <begin position="205"/>
        <end position="208"/>
    </location>
    <ligand>
        <name>substrate</name>
    </ligand>
</feature>
<feature type="binding site" evidence="1">
    <location>
        <position position="205"/>
    </location>
    <ligand>
        <name>S-adenosyl-L-methionine</name>
        <dbReference type="ChEBI" id="CHEBI:59789"/>
    </ligand>
</feature>